<sequence>MKATQTLIATTKELPKEAVLISHQYMLKAGLIKKLASGIYTWMPLGLKVLQKIQNIVRDEMNKAGASELLLPSILPSELLQETHRWDKFGPELLKLHDRHNRDFCYGPTHEEPIVDMARDTIKSYKQLPLNLYQIQTKFRDEIRPRFGVMRAREFIMKDAYSFHENSQCLRNTYNTMYATYCNILDKIGLAYRPVKADTGAIGGDNSHEFQVLANAGEDIICYSNGSDYAANIELATYAKPDLSKRVNSQNTIEKIHTPNIKTIEKLCKEMSFDIKKTIKTMVIKDAGGNFFALVIRGDHELNETKINKLDQIIAPYTLATKEEIFSIFNANPGSLGIYNCPISIIADYSAIAITDLVCGANEDDYHFTNVNWDRDVTNYQIADIRNVVTGDISPDGKGTLELTNGIEVGHIFELEDVYSKPMNANIIGQDGKSKPMLMGCYGFGVSRVMAAAIEQSHDENGIIWPESIAPYQVAILPINYNKSDKVKEVADKLCQDLLGDGIDVLLDDRGARPGVMFADADLIGYSHHVVIGDRLLEQGLIEYKNRKTQEKQEITIAELIKLLK</sequence>
<comment type="function">
    <text evidence="1">Catalyzes the attachment of proline to tRNA(Pro) in a two-step reaction: proline is first activated by ATP to form Pro-AMP and then transferred to the acceptor end of tRNA(Pro). As ProRS can inadvertently accommodate and process non-cognate amino acids such as alanine and cysteine, to avoid such errors it has two additional distinct editing activities against alanine. One activity is designated as 'pretransfer' editing and involves the tRNA(Pro)-independent hydrolysis of activated Ala-AMP. The other activity is designated 'posttransfer' editing and involves deacylation of mischarged Ala-tRNA(Pro). The misacylated Cys-tRNA(Pro) is not edited by ProRS.</text>
</comment>
<comment type="catalytic activity">
    <reaction evidence="1">
        <text>tRNA(Pro) + L-proline + ATP = L-prolyl-tRNA(Pro) + AMP + diphosphate</text>
        <dbReference type="Rhea" id="RHEA:14305"/>
        <dbReference type="Rhea" id="RHEA-COMP:9700"/>
        <dbReference type="Rhea" id="RHEA-COMP:9702"/>
        <dbReference type="ChEBI" id="CHEBI:30616"/>
        <dbReference type="ChEBI" id="CHEBI:33019"/>
        <dbReference type="ChEBI" id="CHEBI:60039"/>
        <dbReference type="ChEBI" id="CHEBI:78442"/>
        <dbReference type="ChEBI" id="CHEBI:78532"/>
        <dbReference type="ChEBI" id="CHEBI:456215"/>
        <dbReference type="EC" id="6.1.1.15"/>
    </reaction>
</comment>
<comment type="subunit">
    <text evidence="1">Homodimer.</text>
</comment>
<comment type="subcellular location">
    <subcellularLocation>
        <location evidence="1">Cytoplasm</location>
    </subcellularLocation>
</comment>
<comment type="domain">
    <text evidence="1">Consists of three domains: the N-terminal catalytic domain, the editing domain and the C-terminal anticodon-binding domain.</text>
</comment>
<comment type="similarity">
    <text evidence="1">Belongs to the class-II aminoacyl-tRNA synthetase family. ProS type 1 subfamily.</text>
</comment>
<reference key="1">
    <citation type="journal article" date="2009" name="PLoS ONE">
        <title>Complete genome sequence of Francisella tularensis subspecies holarctica FTNF002-00.</title>
        <authorList>
            <person name="Barabote R.D."/>
            <person name="Xie G."/>
            <person name="Brettin T.S."/>
            <person name="Hinrichs S.H."/>
            <person name="Fey P.D."/>
            <person name="Jay J.J."/>
            <person name="Engle J.L."/>
            <person name="Godbole S.D."/>
            <person name="Noronha J.M."/>
            <person name="Scheuermann R.H."/>
            <person name="Zhou L.W."/>
            <person name="Lion C."/>
            <person name="Dempsey M.P."/>
        </authorList>
    </citation>
    <scope>NUCLEOTIDE SEQUENCE [LARGE SCALE GENOMIC DNA]</scope>
    <source>
        <strain>FTNF002-00 / FTA</strain>
    </source>
</reference>
<feature type="chain" id="PRO_1000069140" description="Proline--tRNA ligase">
    <location>
        <begin position="1"/>
        <end position="565"/>
    </location>
</feature>
<evidence type="ECO:0000255" key="1">
    <source>
        <dbReference type="HAMAP-Rule" id="MF_01569"/>
    </source>
</evidence>
<dbReference type="EC" id="6.1.1.15" evidence="1"/>
<dbReference type="EMBL" id="CP000803">
    <property type="protein sequence ID" value="ABU61160.1"/>
    <property type="molecule type" value="Genomic_DNA"/>
</dbReference>
<dbReference type="RefSeq" id="WP_010031693.1">
    <property type="nucleotide sequence ID" value="NC_009749.1"/>
</dbReference>
<dbReference type="SMR" id="A7NB07"/>
<dbReference type="KEGG" id="fta:FTA_0684"/>
<dbReference type="HOGENOM" id="CLU_016739_0_0_6"/>
<dbReference type="GO" id="GO:0005829">
    <property type="term" value="C:cytosol"/>
    <property type="evidence" value="ECO:0007669"/>
    <property type="project" value="TreeGrafter"/>
</dbReference>
<dbReference type="GO" id="GO:0002161">
    <property type="term" value="F:aminoacyl-tRNA deacylase activity"/>
    <property type="evidence" value="ECO:0007669"/>
    <property type="project" value="InterPro"/>
</dbReference>
<dbReference type="GO" id="GO:0005524">
    <property type="term" value="F:ATP binding"/>
    <property type="evidence" value="ECO:0007669"/>
    <property type="project" value="UniProtKB-UniRule"/>
</dbReference>
<dbReference type="GO" id="GO:0004827">
    <property type="term" value="F:proline-tRNA ligase activity"/>
    <property type="evidence" value="ECO:0007669"/>
    <property type="project" value="UniProtKB-UniRule"/>
</dbReference>
<dbReference type="GO" id="GO:0006433">
    <property type="term" value="P:prolyl-tRNA aminoacylation"/>
    <property type="evidence" value="ECO:0007669"/>
    <property type="project" value="UniProtKB-UniRule"/>
</dbReference>
<dbReference type="CDD" id="cd04334">
    <property type="entry name" value="ProRS-INS"/>
    <property type="match status" value="1"/>
</dbReference>
<dbReference type="CDD" id="cd00861">
    <property type="entry name" value="ProRS_anticodon_short"/>
    <property type="match status" value="1"/>
</dbReference>
<dbReference type="CDD" id="cd00779">
    <property type="entry name" value="ProRS_core_prok"/>
    <property type="match status" value="1"/>
</dbReference>
<dbReference type="FunFam" id="3.30.930.10:FF:000015">
    <property type="entry name" value="Proline--tRNA ligase"/>
    <property type="match status" value="1"/>
</dbReference>
<dbReference type="Gene3D" id="3.40.50.800">
    <property type="entry name" value="Anticodon-binding domain"/>
    <property type="match status" value="1"/>
</dbReference>
<dbReference type="Gene3D" id="3.30.930.10">
    <property type="entry name" value="Bira Bifunctional Protein, Domain 2"/>
    <property type="match status" value="2"/>
</dbReference>
<dbReference type="HAMAP" id="MF_01569">
    <property type="entry name" value="Pro_tRNA_synth_type1"/>
    <property type="match status" value="1"/>
</dbReference>
<dbReference type="InterPro" id="IPR002314">
    <property type="entry name" value="aa-tRNA-synt_IIb"/>
</dbReference>
<dbReference type="InterPro" id="IPR006195">
    <property type="entry name" value="aa-tRNA-synth_II"/>
</dbReference>
<dbReference type="InterPro" id="IPR045864">
    <property type="entry name" value="aa-tRNA-synth_II/BPL/LPL"/>
</dbReference>
<dbReference type="InterPro" id="IPR004154">
    <property type="entry name" value="Anticodon-bd"/>
</dbReference>
<dbReference type="InterPro" id="IPR036621">
    <property type="entry name" value="Anticodon-bd_dom_sf"/>
</dbReference>
<dbReference type="InterPro" id="IPR002316">
    <property type="entry name" value="Pro-tRNA-ligase_IIa"/>
</dbReference>
<dbReference type="InterPro" id="IPR004500">
    <property type="entry name" value="Pro-tRNA-synth_IIa_bac-type"/>
</dbReference>
<dbReference type="InterPro" id="IPR023717">
    <property type="entry name" value="Pro-tRNA-Synthase_IIa_type1"/>
</dbReference>
<dbReference type="InterPro" id="IPR050062">
    <property type="entry name" value="Pro-tRNA_synthetase"/>
</dbReference>
<dbReference type="InterPro" id="IPR044140">
    <property type="entry name" value="ProRS_anticodon_short"/>
</dbReference>
<dbReference type="InterPro" id="IPR033730">
    <property type="entry name" value="ProRS_core_prok"/>
</dbReference>
<dbReference type="InterPro" id="IPR036754">
    <property type="entry name" value="YbaK/aa-tRNA-synt-asso_dom_sf"/>
</dbReference>
<dbReference type="InterPro" id="IPR007214">
    <property type="entry name" value="YbaK/aa-tRNA-synth-assoc-dom"/>
</dbReference>
<dbReference type="NCBIfam" id="NF006625">
    <property type="entry name" value="PRK09194.1"/>
    <property type="match status" value="1"/>
</dbReference>
<dbReference type="NCBIfam" id="TIGR00409">
    <property type="entry name" value="proS_fam_II"/>
    <property type="match status" value="1"/>
</dbReference>
<dbReference type="PANTHER" id="PTHR42753">
    <property type="entry name" value="MITOCHONDRIAL RIBOSOME PROTEIN L39/PROLYL-TRNA LIGASE FAMILY MEMBER"/>
    <property type="match status" value="1"/>
</dbReference>
<dbReference type="PANTHER" id="PTHR42753:SF2">
    <property type="entry name" value="PROLINE--TRNA LIGASE"/>
    <property type="match status" value="1"/>
</dbReference>
<dbReference type="Pfam" id="PF03129">
    <property type="entry name" value="HGTP_anticodon"/>
    <property type="match status" value="1"/>
</dbReference>
<dbReference type="Pfam" id="PF00587">
    <property type="entry name" value="tRNA-synt_2b"/>
    <property type="match status" value="1"/>
</dbReference>
<dbReference type="Pfam" id="PF04073">
    <property type="entry name" value="tRNA_edit"/>
    <property type="match status" value="1"/>
</dbReference>
<dbReference type="PRINTS" id="PR01046">
    <property type="entry name" value="TRNASYNTHPRO"/>
</dbReference>
<dbReference type="SUPFAM" id="SSF52954">
    <property type="entry name" value="Class II aaRS ABD-related"/>
    <property type="match status" value="1"/>
</dbReference>
<dbReference type="SUPFAM" id="SSF55681">
    <property type="entry name" value="Class II aaRS and biotin synthetases"/>
    <property type="match status" value="1"/>
</dbReference>
<dbReference type="SUPFAM" id="SSF55826">
    <property type="entry name" value="YbaK/ProRS associated domain"/>
    <property type="match status" value="1"/>
</dbReference>
<dbReference type="PROSITE" id="PS50862">
    <property type="entry name" value="AA_TRNA_LIGASE_II"/>
    <property type="match status" value="1"/>
</dbReference>
<name>SYP_FRATF</name>
<keyword id="KW-0030">Aminoacyl-tRNA synthetase</keyword>
<keyword id="KW-0067">ATP-binding</keyword>
<keyword id="KW-0963">Cytoplasm</keyword>
<keyword id="KW-0436">Ligase</keyword>
<keyword id="KW-0547">Nucleotide-binding</keyword>
<keyword id="KW-0648">Protein biosynthesis</keyword>
<organism>
    <name type="scientific">Francisella tularensis subsp. holarctica (strain FTNF002-00 / FTA)</name>
    <dbReference type="NCBI Taxonomy" id="458234"/>
    <lineage>
        <taxon>Bacteria</taxon>
        <taxon>Pseudomonadati</taxon>
        <taxon>Pseudomonadota</taxon>
        <taxon>Gammaproteobacteria</taxon>
        <taxon>Thiotrichales</taxon>
        <taxon>Francisellaceae</taxon>
        <taxon>Francisella</taxon>
    </lineage>
</organism>
<gene>
    <name evidence="1" type="primary">proS</name>
    <name type="ordered locus">FTA_0684</name>
</gene>
<protein>
    <recommendedName>
        <fullName evidence="1">Proline--tRNA ligase</fullName>
        <ecNumber evidence="1">6.1.1.15</ecNumber>
    </recommendedName>
    <alternativeName>
        <fullName evidence="1">Prolyl-tRNA synthetase</fullName>
        <shortName evidence="1">ProRS</shortName>
    </alternativeName>
</protein>
<accession>A7NB07</accession>
<proteinExistence type="inferred from homology"/>